<accession>Q9TTC6</accession>
<organism>
    <name type="scientific">Oryctolagus cuniculus</name>
    <name type="common">Rabbit</name>
    <dbReference type="NCBI Taxonomy" id="9986"/>
    <lineage>
        <taxon>Eukaryota</taxon>
        <taxon>Metazoa</taxon>
        <taxon>Chordata</taxon>
        <taxon>Craniata</taxon>
        <taxon>Vertebrata</taxon>
        <taxon>Euteleostomi</taxon>
        <taxon>Mammalia</taxon>
        <taxon>Eutheria</taxon>
        <taxon>Euarchontoglires</taxon>
        <taxon>Glires</taxon>
        <taxon>Lagomorpha</taxon>
        <taxon>Leporidae</taxon>
        <taxon>Oryctolagus</taxon>
    </lineage>
</organism>
<sequence length="164" mass="17837">MVNPTVFFDIAVDGEPLGRVSFELFADKVPKTAENFRALSTGEKGFGYKGSCFHRIIPGFMCQGGDFTRHNGTGGKSIYGEKFEDENFLLKHTGPGILSMANAGPNTNGSQFFICTAKTEWLDGKHVVFGRVKEGMSIVEAMEHFGSENGKTSKKITIANCGQL</sequence>
<evidence type="ECO:0000250" key="1">
    <source>
        <dbReference type="UniProtKB" id="P17742"/>
    </source>
</evidence>
<evidence type="ECO:0000250" key="2">
    <source>
        <dbReference type="UniProtKB" id="P62937"/>
    </source>
</evidence>
<evidence type="ECO:0000255" key="3"/>
<evidence type="ECO:0000255" key="4">
    <source>
        <dbReference type="PROSITE-ProRule" id="PRU00156"/>
    </source>
</evidence>
<evidence type="ECO:0000305" key="5"/>
<comment type="function">
    <text evidence="1 2">Catalyzes the cis-trans isomerization of proline imidic peptide bonds in oligopeptides (By similarity). Exerts a strong chemotactic effect on leukocytes partly through activation of one of its membrane receptors BSG/CD147, initiating a signaling cascade that culminates in MAPK/ERK activation (By similarity). Activates endothelial cells (ECs) in a proinflammatory manner by stimulating activation of NF-kappa-B and ERK, JNK and p38 MAP-kinases and by inducing expression of adhesion molecules including SELE and VCAM1 (By similarity). Induces apoptosis in ECs by promoting the FOXO1-dependent expression of CCL2 and BCL2L11 which are involved in EC chemotaxis and apoptosis (By similarity). In response to oxidative stress, initiates proapoptotic and antiapoptotic signaling in ECs via activation of NF-kappa-B and AKT1 and up-regulation of antiapoptotic protein BCL2 (By similarity). Negatively regulates MAP3K5/ASK1 kinase activity, autophosphorylation and oxidative stress-induced apoptosis mediated by MAP3K5/ASK1 (By similarity). Necessary for the assembly of TARDBP in heterogeneous nuclear ribonucleoprotein (hnRNP) complexes and regulates TARDBP binding to RNA UG repeats and TARDBP-dependent expression of HDAC6, ATG7 and VCP which are involved in clearance of protein aggregates (By similarity). Plays an important role in platelet activation and aggregation (By similarity). Regulates calcium mobilization and integrin ITGA2B:ITGB3 bidirectional signaling via increased ROS production as well as by facilitating the interaction between integrin and the cell cytoskeleton (By similarity). Binds heparan sulfate glycosaminoglycans (By similarity).</text>
</comment>
<comment type="catalytic activity">
    <reaction evidence="2">
        <text>[protein]-peptidylproline (omega=180) = [protein]-peptidylproline (omega=0)</text>
        <dbReference type="Rhea" id="RHEA:16237"/>
        <dbReference type="Rhea" id="RHEA-COMP:10747"/>
        <dbReference type="Rhea" id="RHEA-COMP:10748"/>
        <dbReference type="ChEBI" id="CHEBI:83833"/>
        <dbReference type="ChEBI" id="CHEBI:83834"/>
        <dbReference type="EC" id="5.2.1.8"/>
    </reaction>
</comment>
<comment type="activity regulation">
    <text evidence="2">Binds cyclosporin A (CsA). CsA mediates some of its effects via an inhibitory action on PPIase.</text>
</comment>
<comment type="subunit">
    <text evidence="1 2">Interacts with protein phosphatase PPP3CA/calcineurin A (By similarity). Interacts with isoform 2 of BSG/CD147 (By similarity). Interacts with FOXO1; the interaction promotes FOXO1 dephosphorylation, nuclear accumulation and transcriptional activity (By similarity). Interacts with integrin ITGA2B:ITGB3; the interaction is ROS and peptidyl-prolyl cis-trans isomerase (PPIase) activity-dependent and is increased in the presence of thrombin (By similarity). Interacts with MAP3K5 (By similarity). Interacts with TARDBP; the interaction is dependent on the RNA-binding activity of TARDBP and the PPIase activity of PPIA/CYPA and the acetylation of PPIA/CYPA at Lys-125 favors the interaction (By similarity). Interacts with HNRNPA1, HNRNPA2B1, HNRNPC, RBMX, HNRNPK and HNRNPM (By similarity).</text>
</comment>
<comment type="subcellular location">
    <subcellularLocation>
        <location evidence="2">Cytoplasm</location>
    </subcellularLocation>
    <subcellularLocation>
        <location evidence="2">Secreted</location>
    </subcellularLocation>
    <subcellularLocation>
        <location evidence="2">Nucleus</location>
    </subcellularLocation>
    <text evidence="2">Secretion occurs in response to oxidative stress in vascular smooth muscle through a vesicular secretory pathway that involves actin remodeling and myosin II activation, and mediates ERK1/2 activation.</text>
</comment>
<comment type="PTM">
    <text evidence="2">Acetylation at Lys-125 markedly inhibits catalysis of cis to trans isomerization (By similarity). PPIA acetylation also antagonizes the immunosuppressive effects of cyclosporine by inhibiting the sequential steps of cyclosporine binding and calcineurin inhibition (By similarity). Acetylation at Lys-125 favors the interaction with TARDBP (By similarity).</text>
</comment>
<comment type="similarity">
    <text evidence="5">Belongs to the cyclophilin-type PPIase family. PPIase A subfamily.</text>
</comment>
<keyword id="KW-0007">Acetylation</keyword>
<keyword id="KW-0053">Apoptosis</keyword>
<keyword id="KW-0963">Cytoplasm</keyword>
<keyword id="KW-0325">Glycoprotein</keyword>
<keyword id="KW-0413">Isomerase</keyword>
<keyword id="KW-1017">Isopeptide bond</keyword>
<keyword id="KW-0539">Nucleus</keyword>
<keyword id="KW-0597">Phosphoprotein</keyword>
<keyword id="KW-1185">Reference proteome</keyword>
<keyword id="KW-0697">Rotamase</keyword>
<keyword id="KW-0964">Secreted</keyword>
<keyword id="KW-0832">Ubl conjugation</keyword>
<proteinExistence type="evidence at transcript level"/>
<dbReference type="EC" id="5.2.1.8" evidence="2"/>
<dbReference type="EMBL" id="AF139893">
    <property type="protein sequence ID" value="AAF22215.1"/>
    <property type="molecule type" value="mRNA"/>
</dbReference>
<dbReference type="RefSeq" id="NP_001075526.1">
    <property type="nucleotide sequence ID" value="NM_001082057.1"/>
</dbReference>
<dbReference type="SMR" id="Q9TTC6"/>
<dbReference type="FunCoup" id="Q9TTC6">
    <property type="interactions" value="1143"/>
</dbReference>
<dbReference type="STRING" id="9986.ENSOCUP00000021683"/>
<dbReference type="GlyCosmos" id="Q9TTC6">
    <property type="glycosylation" value="1 site, No reported glycans"/>
</dbReference>
<dbReference type="PaxDb" id="9986-ENSOCUP00000021683"/>
<dbReference type="GeneID" id="100008724"/>
<dbReference type="KEGG" id="ocu:100008724"/>
<dbReference type="CTD" id="5478"/>
<dbReference type="eggNOG" id="KOG0865">
    <property type="taxonomic scope" value="Eukaryota"/>
</dbReference>
<dbReference type="InParanoid" id="Q9TTC6"/>
<dbReference type="OrthoDB" id="9543749at2759"/>
<dbReference type="BRENDA" id="5.2.1.8">
    <property type="organism ID" value="1749"/>
</dbReference>
<dbReference type="Proteomes" id="UP000001811">
    <property type="component" value="Unplaced"/>
</dbReference>
<dbReference type="GO" id="GO:0005737">
    <property type="term" value="C:cytoplasm"/>
    <property type="evidence" value="ECO:0000250"/>
    <property type="project" value="UniProtKB"/>
</dbReference>
<dbReference type="GO" id="GO:0005829">
    <property type="term" value="C:cytosol"/>
    <property type="evidence" value="ECO:0000250"/>
    <property type="project" value="UniProtKB"/>
</dbReference>
<dbReference type="GO" id="GO:0005576">
    <property type="term" value="C:extracellular region"/>
    <property type="evidence" value="ECO:0000250"/>
    <property type="project" value="UniProtKB"/>
</dbReference>
<dbReference type="GO" id="GO:0005634">
    <property type="term" value="C:nucleus"/>
    <property type="evidence" value="ECO:0000250"/>
    <property type="project" value="UniProtKB"/>
</dbReference>
<dbReference type="GO" id="GO:0016018">
    <property type="term" value="F:cyclosporin A binding"/>
    <property type="evidence" value="ECO:0007669"/>
    <property type="project" value="TreeGrafter"/>
</dbReference>
<dbReference type="GO" id="GO:1904399">
    <property type="term" value="F:heparan sulfate binding"/>
    <property type="evidence" value="ECO:0000250"/>
    <property type="project" value="UniProtKB"/>
</dbReference>
<dbReference type="GO" id="GO:0005178">
    <property type="term" value="F:integrin binding"/>
    <property type="evidence" value="ECO:0000250"/>
    <property type="project" value="UniProtKB"/>
</dbReference>
<dbReference type="GO" id="GO:0003755">
    <property type="term" value="F:peptidyl-prolyl cis-trans isomerase activity"/>
    <property type="evidence" value="ECO:0000250"/>
    <property type="project" value="UniProtKB"/>
</dbReference>
<dbReference type="GO" id="GO:0032148">
    <property type="term" value="P:activation of protein kinase B activity"/>
    <property type="evidence" value="ECO:0000250"/>
    <property type="project" value="UniProtKB"/>
</dbReference>
<dbReference type="GO" id="GO:0006915">
    <property type="term" value="P:apoptotic process"/>
    <property type="evidence" value="ECO:0000250"/>
    <property type="project" value="UniProtKB"/>
</dbReference>
<dbReference type="GO" id="GO:0060352">
    <property type="term" value="P:cell adhesion molecule production"/>
    <property type="evidence" value="ECO:0000250"/>
    <property type="project" value="UniProtKB"/>
</dbReference>
<dbReference type="GO" id="GO:0034599">
    <property type="term" value="P:cellular response to oxidative stress"/>
    <property type="evidence" value="ECO:0000250"/>
    <property type="project" value="UniProtKB"/>
</dbReference>
<dbReference type="GO" id="GO:0042118">
    <property type="term" value="P:endothelial cell activation"/>
    <property type="evidence" value="ECO:0000250"/>
    <property type="project" value="UniProtKB"/>
</dbReference>
<dbReference type="GO" id="GO:0030595">
    <property type="term" value="P:leukocyte chemotaxis"/>
    <property type="evidence" value="ECO:0000250"/>
    <property type="project" value="UniProtKB"/>
</dbReference>
<dbReference type="GO" id="GO:1902176">
    <property type="term" value="P:negative regulation of oxidative stress-induced intrinsic apoptotic signaling pathway"/>
    <property type="evidence" value="ECO:0000250"/>
    <property type="project" value="UniProtKB"/>
</dbReference>
<dbReference type="GO" id="GO:0061944">
    <property type="term" value="P:negative regulation of protein K48-linked ubiquitination"/>
    <property type="evidence" value="ECO:0000250"/>
    <property type="project" value="UniProtKB"/>
</dbReference>
<dbReference type="GO" id="GO:0006469">
    <property type="term" value="P:negative regulation of protein kinase activity"/>
    <property type="evidence" value="ECO:0000250"/>
    <property type="project" value="UniProtKB"/>
</dbReference>
<dbReference type="GO" id="GO:0001933">
    <property type="term" value="P:negative regulation of protein phosphorylation"/>
    <property type="evidence" value="ECO:0000250"/>
    <property type="project" value="UniProtKB"/>
</dbReference>
<dbReference type="GO" id="GO:0032873">
    <property type="term" value="P:negative regulation of stress-activated MAPK cascade"/>
    <property type="evidence" value="ECO:0000250"/>
    <property type="project" value="UniProtKB"/>
</dbReference>
<dbReference type="GO" id="GO:0030593">
    <property type="term" value="P:neutrophil chemotaxis"/>
    <property type="evidence" value="ECO:0000250"/>
    <property type="project" value="UniProtKB"/>
</dbReference>
<dbReference type="GO" id="GO:0030168">
    <property type="term" value="P:platelet activation"/>
    <property type="evidence" value="ECO:0000250"/>
    <property type="project" value="UniProtKB"/>
</dbReference>
<dbReference type="GO" id="GO:0070527">
    <property type="term" value="P:platelet aggregation"/>
    <property type="evidence" value="ECO:0000250"/>
    <property type="project" value="UniProtKB"/>
</dbReference>
<dbReference type="GO" id="GO:0043410">
    <property type="term" value="P:positive regulation of MAPK cascade"/>
    <property type="evidence" value="ECO:0000250"/>
    <property type="project" value="UniProtKB"/>
</dbReference>
<dbReference type="GO" id="GO:0051092">
    <property type="term" value="P:positive regulation of NF-kappaB transcription factor activity"/>
    <property type="evidence" value="ECO:0000250"/>
    <property type="project" value="UniProtKB"/>
</dbReference>
<dbReference type="GO" id="GO:0001934">
    <property type="term" value="P:positive regulation of protein phosphorylation"/>
    <property type="evidence" value="ECO:0000250"/>
    <property type="project" value="UniProtKB"/>
</dbReference>
<dbReference type="GO" id="GO:0006457">
    <property type="term" value="P:protein folding"/>
    <property type="evidence" value="ECO:0007669"/>
    <property type="project" value="InterPro"/>
</dbReference>
<dbReference type="GO" id="GO:0000413">
    <property type="term" value="P:protein peptidyl-prolyl isomerization"/>
    <property type="evidence" value="ECO:0000250"/>
    <property type="project" value="UniProtKB"/>
</dbReference>
<dbReference type="GO" id="GO:2001233">
    <property type="term" value="P:regulation of apoptotic signaling pathway"/>
    <property type="evidence" value="ECO:0000250"/>
    <property type="project" value="UniProtKB"/>
</dbReference>
<dbReference type="GO" id="GO:0045069">
    <property type="term" value="P:regulation of viral genome replication"/>
    <property type="evidence" value="ECO:0000250"/>
    <property type="project" value="UniProtKB"/>
</dbReference>
<dbReference type="CDD" id="cd01926">
    <property type="entry name" value="cyclophilin_ABH_like"/>
    <property type="match status" value="1"/>
</dbReference>
<dbReference type="FunFam" id="2.40.100.10:FF:000011">
    <property type="entry name" value="Peptidyl-prolyl cis-trans isomerase A"/>
    <property type="match status" value="1"/>
</dbReference>
<dbReference type="Gene3D" id="2.40.100.10">
    <property type="entry name" value="Cyclophilin-like"/>
    <property type="match status" value="1"/>
</dbReference>
<dbReference type="InterPro" id="IPR029000">
    <property type="entry name" value="Cyclophilin-like_dom_sf"/>
</dbReference>
<dbReference type="InterPro" id="IPR024936">
    <property type="entry name" value="Cyclophilin-type_PPIase"/>
</dbReference>
<dbReference type="InterPro" id="IPR020892">
    <property type="entry name" value="Cyclophilin-type_PPIase_CS"/>
</dbReference>
<dbReference type="InterPro" id="IPR002130">
    <property type="entry name" value="Cyclophilin-type_PPIase_dom"/>
</dbReference>
<dbReference type="PANTHER" id="PTHR11071">
    <property type="entry name" value="PEPTIDYL-PROLYL CIS-TRANS ISOMERASE"/>
    <property type="match status" value="1"/>
</dbReference>
<dbReference type="PANTHER" id="PTHR11071:SF490">
    <property type="entry name" value="PEPTIDYL-PROLYL CIS-TRANS ISOMERASE A"/>
    <property type="match status" value="1"/>
</dbReference>
<dbReference type="Pfam" id="PF00160">
    <property type="entry name" value="Pro_isomerase"/>
    <property type="match status" value="1"/>
</dbReference>
<dbReference type="PIRSF" id="PIRSF001467">
    <property type="entry name" value="Peptidylpro_ismrse"/>
    <property type="match status" value="1"/>
</dbReference>
<dbReference type="PRINTS" id="PR00153">
    <property type="entry name" value="CSAPPISMRASE"/>
</dbReference>
<dbReference type="SUPFAM" id="SSF50891">
    <property type="entry name" value="Cyclophilin-like"/>
    <property type="match status" value="1"/>
</dbReference>
<dbReference type="PROSITE" id="PS00170">
    <property type="entry name" value="CSA_PPIASE_1"/>
    <property type="match status" value="1"/>
</dbReference>
<dbReference type="PROSITE" id="PS50072">
    <property type="entry name" value="CSA_PPIASE_2"/>
    <property type="match status" value="1"/>
</dbReference>
<gene>
    <name type="primary">PPIA</name>
</gene>
<name>PPIA_RABIT</name>
<feature type="chain" id="PRO_0000423251" description="Peptidyl-prolyl cis-trans isomerase A">
    <location>
        <begin position="1"/>
        <end position="164"/>
    </location>
</feature>
<feature type="initiator methionine" description="Removed; alternate" evidence="2">
    <location>
        <position position="1"/>
    </location>
</feature>
<feature type="chain" id="PRO_0000064120" description="Peptidyl-prolyl cis-trans isomerase A, N-terminally processed">
    <location>
        <begin position="2"/>
        <end position="164"/>
    </location>
</feature>
<feature type="domain" description="PPIase cyclophilin-type" evidence="4">
    <location>
        <begin position="7"/>
        <end position="163"/>
    </location>
</feature>
<feature type="modified residue" description="N-acetylmethionine" evidence="2">
    <location>
        <position position="1"/>
    </location>
</feature>
<feature type="modified residue" description="N-acetylvaline; in Peptidyl-prolyl cis-trans isomerase A, N-terminally processed" evidence="2">
    <location>
        <position position="2"/>
    </location>
</feature>
<feature type="modified residue" description="N6-acetyllysine; alternate" evidence="2">
    <location>
        <position position="28"/>
    </location>
</feature>
<feature type="modified residue" description="N6-acetyllysine" evidence="2">
    <location>
        <position position="44"/>
    </location>
</feature>
<feature type="modified residue" description="N6-acetyllysine" evidence="2">
    <location>
        <position position="76"/>
    </location>
</feature>
<feature type="modified residue" description="Phosphoserine" evidence="2">
    <location>
        <position position="77"/>
    </location>
</feature>
<feature type="modified residue" description="N6-acetyllysine; alternate" evidence="2">
    <location>
        <position position="82"/>
    </location>
</feature>
<feature type="modified residue" description="Phosphothreonine" evidence="2">
    <location>
        <position position="93"/>
    </location>
</feature>
<feature type="modified residue" description="N6-acetyllysine" evidence="2">
    <location>
        <position position="125"/>
    </location>
</feature>
<feature type="modified residue" description="N6-acetyllysine" evidence="1">
    <location>
        <position position="133"/>
    </location>
</feature>
<feature type="glycosylation site" description="N-linked (GlcNAc...) asparagine" evidence="3">
    <location>
        <position position="108"/>
    </location>
</feature>
<feature type="cross-link" description="Glycyl lysine isopeptide (Lys-Gly) (interchain with G-Cter in SUMO2); alternate" evidence="2">
    <location>
        <position position="28"/>
    </location>
</feature>
<feature type="cross-link" description="Glycyl lysine isopeptide (Lys-Gly) (interchain with G-Cter in ubiquitin); alternate" evidence="2">
    <location>
        <position position="28"/>
    </location>
</feature>
<feature type="cross-link" description="Glycyl lysine isopeptide (Lys-Gly) (interchain with G-Cter in SUMO2); alternate" evidence="2">
    <location>
        <position position="82"/>
    </location>
</feature>
<protein>
    <recommendedName>
        <fullName>Peptidyl-prolyl cis-trans isomerase A</fullName>
        <shortName>PPIase A</shortName>
        <ecNumber evidence="2">5.2.1.8</ecNumber>
    </recommendedName>
    <alternativeName>
        <fullName>Cyclophilin 18</fullName>
    </alternativeName>
    <alternativeName>
        <fullName>Cyclophilin A</fullName>
    </alternativeName>
    <alternativeName>
        <fullName>Cyclosporin A-binding protein</fullName>
    </alternativeName>
    <alternativeName>
        <fullName>Rotamase A</fullName>
    </alternativeName>
    <component>
        <recommendedName>
            <fullName>Peptidyl-prolyl cis-trans isomerase A, N-terminally processed</fullName>
        </recommendedName>
    </component>
</protein>
<reference key="1">
    <citation type="journal article" date="2000" name="Biol. Reprod.">
        <title>Oxygen stress increases prolyl cis/trans isomerase activity and expression of cyclophilin 18 in rabbit blastocysts.</title>
        <authorList>
            <person name="Santos A.N."/>
            <person name="Korber S."/>
            <person name="Kullertz G."/>
            <person name="Fischer G."/>
            <person name="Fischer B."/>
        </authorList>
    </citation>
    <scope>NUCLEOTIDE SEQUENCE [MRNA]</scope>
    <source>
        <strain>Zika</strain>
    </source>
</reference>